<reference key="1">
    <citation type="journal article" date="2003" name="Proc. Natl. Acad. Sci. U.S.A.">
        <title>The complete genome sequence of the Arabidopsis and tomato pathogen Pseudomonas syringae pv. tomato DC3000.</title>
        <authorList>
            <person name="Buell C.R."/>
            <person name="Joardar V."/>
            <person name="Lindeberg M."/>
            <person name="Selengut J."/>
            <person name="Paulsen I.T."/>
            <person name="Gwinn M.L."/>
            <person name="Dodson R.J."/>
            <person name="DeBoy R.T."/>
            <person name="Durkin A.S."/>
            <person name="Kolonay J.F."/>
            <person name="Madupu R."/>
            <person name="Daugherty S.C."/>
            <person name="Brinkac L.M."/>
            <person name="Beanan M.J."/>
            <person name="Haft D.H."/>
            <person name="Nelson W.C."/>
            <person name="Davidsen T.M."/>
            <person name="Zafar N."/>
            <person name="Zhou L."/>
            <person name="Liu J."/>
            <person name="Yuan Q."/>
            <person name="Khouri H.M."/>
            <person name="Fedorova N.B."/>
            <person name="Tran B."/>
            <person name="Russell D."/>
            <person name="Berry K.J."/>
            <person name="Utterback T.R."/>
            <person name="Van Aken S.E."/>
            <person name="Feldblyum T.V."/>
            <person name="D'Ascenzo M."/>
            <person name="Deng W.-L."/>
            <person name="Ramos A.R."/>
            <person name="Alfano J.R."/>
            <person name="Cartinhour S."/>
            <person name="Chatterjee A.K."/>
            <person name="Delaney T.P."/>
            <person name="Lazarowitz S.G."/>
            <person name="Martin G.B."/>
            <person name="Schneider D.J."/>
            <person name="Tang X."/>
            <person name="Bender C.L."/>
            <person name="White O."/>
            <person name="Fraser C.M."/>
            <person name="Collmer A."/>
        </authorList>
    </citation>
    <scope>NUCLEOTIDE SEQUENCE [LARGE SCALE GENOMIC DNA]</scope>
    <source>
        <strain>ATCC BAA-871 / DC3000</strain>
    </source>
</reference>
<name>HTPX_PSESM</name>
<proteinExistence type="inferred from homology"/>
<dbReference type="EC" id="3.4.24.-" evidence="1"/>
<dbReference type="EMBL" id="AE016853">
    <property type="protein sequence ID" value="AAO55298.1"/>
    <property type="molecule type" value="Genomic_DNA"/>
</dbReference>
<dbReference type="RefSeq" id="NP_791603.1">
    <property type="nucleotide sequence ID" value="NC_004578.1"/>
</dbReference>
<dbReference type="RefSeq" id="WP_004397849.1">
    <property type="nucleotide sequence ID" value="NC_004578.1"/>
</dbReference>
<dbReference type="SMR" id="Q885Q3"/>
<dbReference type="STRING" id="223283.PSPTO_1778"/>
<dbReference type="MEROPS" id="M48.002"/>
<dbReference type="GeneID" id="61789990"/>
<dbReference type="KEGG" id="pst:PSPTO_1778"/>
<dbReference type="PATRIC" id="fig|223283.9.peg.1807"/>
<dbReference type="eggNOG" id="COG0501">
    <property type="taxonomic scope" value="Bacteria"/>
</dbReference>
<dbReference type="HOGENOM" id="CLU_042266_1_0_6"/>
<dbReference type="OrthoDB" id="15218at2"/>
<dbReference type="PhylomeDB" id="Q885Q3"/>
<dbReference type="Proteomes" id="UP000002515">
    <property type="component" value="Chromosome"/>
</dbReference>
<dbReference type="GO" id="GO:0005886">
    <property type="term" value="C:plasma membrane"/>
    <property type="evidence" value="ECO:0007669"/>
    <property type="project" value="UniProtKB-SubCell"/>
</dbReference>
<dbReference type="GO" id="GO:0004222">
    <property type="term" value="F:metalloendopeptidase activity"/>
    <property type="evidence" value="ECO:0007669"/>
    <property type="project" value="UniProtKB-UniRule"/>
</dbReference>
<dbReference type="GO" id="GO:0008270">
    <property type="term" value="F:zinc ion binding"/>
    <property type="evidence" value="ECO:0007669"/>
    <property type="project" value="UniProtKB-UniRule"/>
</dbReference>
<dbReference type="GO" id="GO:0006508">
    <property type="term" value="P:proteolysis"/>
    <property type="evidence" value="ECO:0007669"/>
    <property type="project" value="UniProtKB-KW"/>
</dbReference>
<dbReference type="CDD" id="cd07335">
    <property type="entry name" value="M48B_HtpX_like"/>
    <property type="match status" value="1"/>
</dbReference>
<dbReference type="Gene3D" id="3.30.2010.10">
    <property type="entry name" value="Metalloproteases ('zincins'), catalytic domain"/>
    <property type="match status" value="1"/>
</dbReference>
<dbReference type="HAMAP" id="MF_00188">
    <property type="entry name" value="Pept_M48_protease_HtpX"/>
    <property type="match status" value="1"/>
</dbReference>
<dbReference type="InterPro" id="IPR050083">
    <property type="entry name" value="HtpX_protease"/>
</dbReference>
<dbReference type="InterPro" id="IPR022919">
    <property type="entry name" value="Pept_M48_protease_HtpX"/>
</dbReference>
<dbReference type="InterPro" id="IPR001915">
    <property type="entry name" value="Peptidase_M48"/>
</dbReference>
<dbReference type="NCBIfam" id="NF003965">
    <property type="entry name" value="PRK05457.1"/>
    <property type="match status" value="1"/>
</dbReference>
<dbReference type="PANTHER" id="PTHR43221">
    <property type="entry name" value="PROTEASE HTPX"/>
    <property type="match status" value="1"/>
</dbReference>
<dbReference type="PANTHER" id="PTHR43221:SF1">
    <property type="entry name" value="PROTEASE HTPX"/>
    <property type="match status" value="1"/>
</dbReference>
<dbReference type="Pfam" id="PF01435">
    <property type="entry name" value="Peptidase_M48"/>
    <property type="match status" value="1"/>
</dbReference>
<gene>
    <name evidence="1" type="primary">htpX</name>
    <name type="ordered locus">PSPTO_1778</name>
</gene>
<comment type="cofactor">
    <cofactor evidence="1">
        <name>Zn(2+)</name>
        <dbReference type="ChEBI" id="CHEBI:29105"/>
    </cofactor>
    <text evidence="1">Binds 1 zinc ion per subunit.</text>
</comment>
<comment type="subcellular location">
    <subcellularLocation>
        <location evidence="1">Cell inner membrane</location>
        <topology evidence="1">Multi-pass membrane protein</topology>
    </subcellularLocation>
</comment>
<comment type="similarity">
    <text evidence="1">Belongs to the peptidase M48B family.</text>
</comment>
<organism>
    <name type="scientific">Pseudomonas syringae pv. tomato (strain ATCC BAA-871 / DC3000)</name>
    <dbReference type="NCBI Taxonomy" id="223283"/>
    <lineage>
        <taxon>Bacteria</taxon>
        <taxon>Pseudomonadati</taxon>
        <taxon>Pseudomonadota</taxon>
        <taxon>Gammaproteobacteria</taxon>
        <taxon>Pseudomonadales</taxon>
        <taxon>Pseudomonadaceae</taxon>
        <taxon>Pseudomonas</taxon>
    </lineage>
</organism>
<sequence length="295" mass="32299">MMRILLFLATNLAVVLIASITLSLFGFNGFMAANGVDLNLNQLLVFCAVFGFAGSLFSLFISKWMAKMSTGTQIITQPRTRHEQWLLQTVEQLSRDAGIKMPEVGIFPAYEANAFATGWNKNDALVAVSQGLLERFSPDEVKAVLAHEIGHVANGDMVTLALVQGVVNTFVMFFARIIGNFVDKVIFKTENGQGIAYYITTIFAELVLGFLASAIVMWFSRKREFRADDAGARLAGTDAMIGALQRLRSEQGVPVNMPDSLTAFGINAGLKKGLAGLFMSHPPLEQRIEALRRRG</sequence>
<feature type="chain" id="PRO_0000138882" description="Protease HtpX">
    <location>
        <begin position="1"/>
        <end position="295"/>
    </location>
</feature>
<feature type="transmembrane region" description="Helical" evidence="1">
    <location>
        <begin position="4"/>
        <end position="24"/>
    </location>
</feature>
<feature type="transmembrane region" description="Helical" evidence="1">
    <location>
        <begin position="42"/>
        <end position="62"/>
    </location>
</feature>
<feature type="transmembrane region" description="Helical" evidence="1">
    <location>
        <begin position="158"/>
        <end position="178"/>
    </location>
</feature>
<feature type="transmembrane region" description="Helical" evidence="1">
    <location>
        <begin position="199"/>
        <end position="219"/>
    </location>
</feature>
<feature type="active site" evidence="1">
    <location>
        <position position="148"/>
    </location>
</feature>
<feature type="binding site" evidence="1">
    <location>
        <position position="147"/>
    </location>
    <ligand>
        <name>Zn(2+)</name>
        <dbReference type="ChEBI" id="CHEBI:29105"/>
        <note>catalytic</note>
    </ligand>
</feature>
<feature type="binding site" evidence="1">
    <location>
        <position position="151"/>
    </location>
    <ligand>
        <name>Zn(2+)</name>
        <dbReference type="ChEBI" id="CHEBI:29105"/>
        <note>catalytic</note>
    </ligand>
</feature>
<feature type="binding site" evidence="1">
    <location>
        <position position="224"/>
    </location>
    <ligand>
        <name>Zn(2+)</name>
        <dbReference type="ChEBI" id="CHEBI:29105"/>
        <note>catalytic</note>
    </ligand>
</feature>
<accession>Q885Q3</accession>
<protein>
    <recommendedName>
        <fullName evidence="1">Protease HtpX</fullName>
        <ecNumber evidence="1">3.4.24.-</ecNumber>
    </recommendedName>
    <alternativeName>
        <fullName evidence="1">Heat shock protein HtpX</fullName>
    </alternativeName>
</protein>
<keyword id="KW-0997">Cell inner membrane</keyword>
<keyword id="KW-1003">Cell membrane</keyword>
<keyword id="KW-0378">Hydrolase</keyword>
<keyword id="KW-0472">Membrane</keyword>
<keyword id="KW-0479">Metal-binding</keyword>
<keyword id="KW-0482">Metalloprotease</keyword>
<keyword id="KW-0645">Protease</keyword>
<keyword id="KW-1185">Reference proteome</keyword>
<keyword id="KW-0812">Transmembrane</keyword>
<keyword id="KW-1133">Transmembrane helix</keyword>
<keyword id="KW-0862">Zinc</keyword>
<evidence type="ECO:0000255" key="1">
    <source>
        <dbReference type="HAMAP-Rule" id="MF_00188"/>
    </source>
</evidence>